<evidence type="ECO:0000255" key="1">
    <source>
        <dbReference type="HAMAP-Rule" id="MF_01103"/>
    </source>
</evidence>
<evidence type="ECO:0000256" key="2">
    <source>
        <dbReference type="SAM" id="MobiDB-lite"/>
    </source>
</evidence>
<name>Y1768_BACVZ</name>
<protein>
    <recommendedName>
        <fullName evidence="1">UPF0291 protein RBAM_017680</fullName>
    </recommendedName>
</protein>
<proteinExistence type="inferred from homology"/>
<organism>
    <name type="scientific">Bacillus velezensis (strain DSM 23117 / BGSC 10A6 / LMG 26770 / FZB42)</name>
    <name type="common">Bacillus amyloliquefaciens subsp. plantarum</name>
    <dbReference type="NCBI Taxonomy" id="326423"/>
    <lineage>
        <taxon>Bacteria</taxon>
        <taxon>Bacillati</taxon>
        <taxon>Bacillota</taxon>
        <taxon>Bacilli</taxon>
        <taxon>Bacillales</taxon>
        <taxon>Bacillaceae</taxon>
        <taxon>Bacillus</taxon>
        <taxon>Bacillus amyloliquefaciens group</taxon>
    </lineage>
</organism>
<comment type="subcellular location">
    <subcellularLocation>
        <location evidence="1">Cytoplasm</location>
    </subcellularLocation>
</comment>
<comment type="similarity">
    <text evidence="1">Belongs to the UPF0291 family.</text>
</comment>
<dbReference type="EMBL" id="CP000560">
    <property type="protein sequence ID" value="ABS74131.1"/>
    <property type="molecule type" value="Genomic_DNA"/>
</dbReference>
<dbReference type="RefSeq" id="WP_003153997.1">
    <property type="nucleotide sequence ID" value="NC_009725.2"/>
</dbReference>
<dbReference type="SMR" id="A7Z555"/>
<dbReference type="GeneID" id="93080900"/>
<dbReference type="KEGG" id="bay:RBAM_017680"/>
<dbReference type="HOGENOM" id="CLU_173137_0_2_9"/>
<dbReference type="Proteomes" id="UP000001120">
    <property type="component" value="Chromosome"/>
</dbReference>
<dbReference type="GO" id="GO:0005737">
    <property type="term" value="C:cytoplasm"/>
    <property type="evidence" value="ECO:0007669"/>
    <property type="project" value="UniProtKB-SubCell"/>
</dbReference>
<dbReference type="Gene3D" id="1.10.287.540">
    <property type="entry name" value="Helix hairpin bin"/>
    <property type="match status" value="1"/>
</dbReference>
<dbReference type="HAMAP" id="MF_01103">
    <property type="entry name" value="UPF0291"/>
    <property type="match status" value="1"/>
</dbReference>
<dbReference type="InterPro" id="IPR009242">
    <property type="entry name" value="DUF896"/>
</dbReference>
<dbReference type="PANTHER" id="PTHR37300">
    <property type="entry name" value="UPF0291 PROTEIN CBO2609/CLC_2481"/>
    <property type="match status" value="1"/>
</dbReference>
<dbReference type="PANTHER" id="PTHR37300:SF1">
    <property type="entry name" value="UPF0291 PROTEIN YNZC"/>
    <property type="match status" value="1"/>
</dbReference>
<dbReference type="Pfam" id="PF05979">
    <property type="entry name" value="DUF896"/>
    <property type="match status" value="1"/>
</dbReference>
<dbReference type="SUPFAM" id="SSF158221">
    <property type="entry name" value="YnzC-like"/>
    <property type="match status" value="1"/>
</dbReference>
<keyword id="KW-0963">Cytoplasm</keyword>
<gene>
    <name type="ordered locus">RBAM_017680</name>
</gene>
<sequence>MISKEKIARINELAQKAKSNTITDEEKAEQQKLRQEYLKGFRSSMKNTLKSVKVIDPEGNDVTPEKLKREQQKNNLH</sequence>
<reference key="1">
    <citation type="journal article" date="2007" name="Nat. Biotechnol.">
        <title>Comparative analysis of the complete genome sequence of the plant growth-promoting bacterium Bacillus amyloliquefaciens FZB42.</title>
        <authorList>
            <person name="Chen X.H."/>
            <person name="Koumoutsi A."/>
            <person name="Scholz R."/>
            <person name="Eisenreich A."/>
            <person name="Schneider K."/>
            <person name="Heinemeyer I."/>
            <person name="Morgenstern B."/>
            <person name="Voss B."/>
            <person name="Hess W.R."/>
            <person name="Reva O."/>
            <person name="Junge H."/>
            <person name="Voigt B."/>
            <person name="Jungblut P.R."/>
            <person name="Vater J."/>
            <person name="Suessmuth R."/>
            <person name="Liesegang H."/>
            <person name="Strittmatter A."/>
            <person name="Gottschalk G."/>
            <person name="Borriss R."/>
        </authorList>
    </citation>
    <scope>NUCLEOTIDE SEQUENCE [LARGE SCALE GENOMIC DNA]</scope>
    <source>
        <strain>DSM 23117 / BGSC 10A6 / LMG 26770 / FZB42</strain>
    </source>
</reference>
<accession>A7Z555</accession>
<feature type="chain" id="PRO_1000084797" description="UPF0291 protein RBAM_017680">
    <location>
        <begin position="1"/>
        <end position="77"/>
    </location>
</feature>
<feature type="region of interest" description="Disordered" evidence="2">
    <location>
        <begin position="55"/>
        <end position="77"/>
    </location>
</feature>
<feature type="compositionally biased region" description="Basic and acidic residues" evidence="2">
    <location>
        <begin position="63"/>
        <end position="77"/>
    </location>
</feature>